<protein>
    <recommendedName>
        <fullName evidence="1">Uncharacterized methyltransferase BC_4369</fullName>
        <ecNumber evidence="1">2.1.1.-</ecNumber>
    </recommendedName>
</protein>
<comment type="function">
    <text evidence="1">Could be a S-adenosyl-L-methionine-dependent methyltransferase.</text>
</comment>
<comment type="similarity">
    <text evidence="1">Belongs to the methyltransferase superfamily. YrrT family.</text>
</comment>
<comment type="sequence caution" evidence="2">
    <conflict type="frameshift">
        <sequence resource="EMBL-CDS" id="AAP11282"/>
    </conflict>
</comment>
<proteinExistence type="inferred from homology"/>
<feature type="chain" id="PRO_0000373843" description="Uncharacterized methyltransferase BC_4369">
    <location>
        <begin position="1"/>
        <end position="212"/>
    </location>
</feature>
<feature type="binding site" evidence="1">
    <location>
        <position position="53"/>
    </location>
    <ligand>
        <name>S-adenosyl-L-methionine</name>
        <dbReference type="ChEBI" id="CHEBI:59789"/>
    </ligand>
</feature>
<feature type="binding site" evidence="1">
    <location>
        <position position="74"/>
    </location>
    <ligand>
        <name>S-adenosyl-L-methionine</name>
        <dbReference type="ChEBI" id="CHEBI:59789"/>
    </ligand>
</feature>
<feature type="binding site" evidence="1">
    <location>
        <position position="97"/>
    </location>
    <ligand>
        <name>S-adenosyl-L-methionine</name>
        <dbReference type="ChEBI" id="CHEBI:59789"/>
    </ligand>
</feature>
<keyword id="KW-0489">Methyltransferase</keyword>
<keyword id="KW-1185">Reference proteome</keyword>
<keyword id="KW-0949">S-adenosyl-L-methionine</keyword>
<keyword id="KW-0808">Transferase</keyword>
<gene>
    <name type="ordered locus">BC_4369</name>
</gene>
<accession>Q818A1</accession>
<dbReference type="EC" id="2.1.1.-" evidence="1"/>
<dbReference type="EMBL" id="AE016877">
    <property type="protein sequence ID" value="AAP11282.1"/>
    <property type="status" value="ALT_FRAME"/>
    <property type="molecule type" value="Genomic_DNA"/>
</dbReference>
<dbReference type="RefSeq" id="NP_834081.1">
    <property type="nucleotide sequence ID" value="NC_004722.1"/>
</dbReference>
<dbReference type="RefSeq" id="WP_000536320.1">
    <property type="nucleotide sequence ID" value="NZ_CP138336.1"/>
</dbReference>
<dbReference type="SMR" id="Q818A1"/>
<dbReference type="STRING" id="226900.BC_4369"/>
<dbReference type="KEGG" id="bce:BC4369"/>
<dbReference type="PATRIC" id="fig|226900.8.peg.4519"/>
<dbReference type="HOGENOM" id="CLU_111961_0_0_9"/>
<dbReference type="OrthoDB" id="465705at2"/>
<dbReference type="Proteomes" id="UP000001417">
    <property type="component" value="Chromosome"/>
</dbReference>
<dbReference type="GO" id="GO:0008168">
    <property type="term" value="F:methyltransferase activity"/>
    <property type="evidence" value="ECO:0000318"/>
    <property type="project" value="GO_Central"/>
</dbReference>
<dbReference type="GO" id="GO:0008757">
    <property type="term" value="F:S-adenosylmethionine-dependent methyltransferase activity"/>
    <property type="evidence" value="ECO:0007669"/>
    <property type="project" value="UniProtKB-UniRule"/>
</dbReference>
<dbReference type="GO" id="GO:0032259">
    <property type="term" value="P:methylation"/>
    <property type="evidence" value="ECO:0007669"/>
    <property type="project" value="UniProtKB-KW"/>
</dbReference>
<dbReference type="CDD" id="cd02440">
    <property type="entry name" value="AdoMet_MTases"/>
    <property type="match status" value="1"/>
</dbReference>
<dbReference type="Gene3D" id="3.40.50.150">
    <property type="entry name" value="Vaccinia Virus protein VP39"/>
    <property type="match status" value="1"/>
</dbReference>
<dbReference type="HAMAP" id="MF_02100">
    <property type="entry name" value="Methyltr_YrrT"/>
    <property type="match status" value="1"/>
</dbReference>
<dbReference type="InterPro" id="IPR041698">
    <property type="entry name" value="Methyltransf_25"/>
</dbReference>
<dbReference type="InterPro" id="IPR029063">
    <property type="entry name" value="SAM-dependent_MTases_sf"/>
</dbReference>
<dbReference type="InterPro" id="IPR023553">
    <property type="entry name" value="Uncharacterised_MeTfrase_YrrT"/>
</dbReference>
<dbReference type="PANTHER" id="PTHR43861:SF1">
    <property type="entry name" value="TRANS-ACONITATE 2-METHYLTRANSFERASE"/>
    <property type="match status" value="1"/>
</dbReference>
<dbReference type="PANTHER" id="PTHR43861">
    <property type="entry name" value="TRANS-ACONITATE 2-METHYLTRANSFERASE-RELATED"/>
    <property type="match status" value="1"/>
</dbReference>
<dbReference type="Pfam" id="PF13649">
    <property type="entry name" value="Methyltransf_25"/>
    <property type="match status" value="1"/>
</dbReference>
<dbReference type="SUPFAM" id="SSF53335">
    <property type="entry name" value="S-adenosyl-L-methionine-dependent methyltransferases"/>
    <property type="match status" value="1"/>
</dbReference>
<name>Y4369_BACCR</name>
<reference key="1">
    <citation type="journal article" date="2003" name="Nature">
        <title>Genome sequence of Bacillus cereus and comparative analysis with Bacillus anthracis.</title>
        <authorList>
            <person name="Ivanova N."/>
            <person name="Sorokin A."/>
            <person name="Anderson I."/>
            <person name="Galleron N."/>
            <person name="Candelon B."/>
            <person name="Kapatral V."/>
            <person name="Bhattacharyya A."/>
            <person name="Reznik G."/>
            <person name="Mikhailova N."/>
            <person name="Lapidus A."/>
            <person name="Chu L."/>
            <person name="Mazur M."/>
            <person name="Goltsman E."/>
            <person name="Larsen N."/>
            <person name="D'Souza M."/>
            <person name="Walunas T."/>
            <person name="Grechkin Y."/>
            <person name="Pusch G."/>
            <person name="Haselkorn R."/>
            <person name="Fonstein M."/>
            <person name="Ehrlich S.D."/>
            <person name="Overbeek R."/>
            <person name="Kyrpides N.C."/>
        </authorList>
    </citation>
    <scope>NUCLEOTIDE SEQUENCE [LARGE SCALE GENOMIC DNA]</scope>
    <source>
        <strain>ATCC 14579 / DSM 31 / CCUG 7414 / JCM 2152 / NBRC 15305 / NCIMB 9373 / NCTC 2599 / NRRL B-3711</strain>
    </source>
</reference>
<sequence>MGTEFNGLFDEWAHTYDSFVQGEDIQYKEVFAHYEDILEDVVNKSFGNVLEFGVGTGNLTNKLLLAGRTVYGIEPSREMRMIAKEKLPKEFSITEGDFLSFEVPNSIDTIVSTYAFHHLTDDEKNVAIAKYSQLLNKGGKIVFADTIFADQDAYDKTVETAKERGFHQLANDLQTEYYTRIPVMQTIFENNGFHVTFTRLNHFVWVMEATKQ</sequence>
<organism>
    <name type="scientific">Bacillus cereus (strain ATCC 14579 / DSM 31 / CCUG 7414 / JCM 2152 / NBRC 15305 / NCIMB 9373 / NCTC 2599 / NRRL B-3711)</name>
    <dbReference type="NCBI Taxonomy" id="226900"/>
    <lineage>
        <taxon>Bacteria</taxon>
        <taxon>Bacillati</taxon>
        <taxon>Bacillota</taxon>
        <taxon>Bacilli</taxon>
        <taxon>Bacillales</taxon>
        <taxon>Bacillaceae</taxon>
        <taxon>Bacillus</taxon>
        <taxon>Bacillus cereus group</taxon>
    </lineage>
</organism>
<evidence type="ECO:0000255" key="1">
    <source>
        <dbReference type="HAMAP-Rule" id="MF_02100"/>
    </source>
</evidence>
<evidence type="ECO:0000305" key="2"/>